<protein>
    <recommendedName>
        <fullName evidence="1">Ecotin</fullName>
    </recommendedName>
</protein>
<sequence>MKKCSIILASVLLATSINAIADTPTPLNQQQPLEKIAPYPQAEKGMSRQVIFLEPQKDESRFKVELLIGKTLNVDCNRHMLGGNLETRTLSGWGFDYLVMDKISQPASTMMACPEDSKPQVKFVTANLGDAAMQRYNSRLPIVVYVPQGVEVKYRIWEAGEDIRSAQVK</sequence>
<accession>Q8ZGS0</accession>
<accession>Q0WHJ3</accession>
<accession>Q8D013</accession>
<dbReference type="EMBL" id="AL590842">
    <property type="protein sequence ID" value="CAL19872.1"/>
    <property type="molecule type" value="Genomic_DNA"/>
</dbReference>
<dbReference type="EMBL" id="AE009952">
    <property type="protein sequence ID" value="AAM86528.1"/>
    <property type="status" value="ALT_INIT"/>
    <property type="molecule type" value="Genomic_DNA"/>
</dbReference>
<dbReference type="EMBL" id="AE017042">
    <property type="protein sequence ID" value="AAS61181.1"/>
    <property type="molecule type" value="Genomic_DNA"/>
</dbReference>
<dbReference type="PIR" id="AF0148">
    <property type="entry name" value="AF0148"/>
</dbReference>
<dbReference type="RefSeq" id="WP_002210815.1">
    <property type="nucleotide sequence ID" value="NZ_WUCM01000017.1"/>
</dbReference>
<dbReference type="RefSeq" id="YP_002346245.1">
    <property type="nucleotide sequence ID" value="NC_003143.1"/>
</dbReference>
<dbReference type="SMR" id="Q8ZGS0"/>
<dbReference type="STRING" id="214092.YPO1211"/>
<dbReference type="MEROPS" id="I11.001"/>
<dbReference type="PaxDb" id="214092-YPO1211"/>
<dbReference type="DNASU" id="1147924"/>
<dbReference type="EnsemblBacteria" id="AAS61181">
    <property type="protein sequence ID" value="AAS61181"/>
    <property type="gene ID" value="YP_0926"/>
</dbReference>
<dbReference type="GeneID" id="57977350"/>
<dbReference type="KEGG" id="ype:YPO1211"/>
<dbReference type="KEGG" id="ypk:y2977"/>
<dbReference type="KEGG" id="ypm:YP_0926"/>
<dbReference type="PATRIC" id="fig|214092.21.peg.1513"/>
<dbReference type="eggNOG" id="COG4574">
    <property type="taxonomic scope" value="Bacteria"/>
</dbReference>
<dbReference type="HOGENOM" id="CLU_111565_0_0_6"/>
<dbReference type="OMA" id="PKAEKGM"/>
<dbReference type="OrthoDB" id="997196at2"/>
<dbReference type="Proteomes" id="UP000000815">
    <property type="component" value="Chromosome"/>
</dbReference>
<dbReference type="Proteomes" id="UP000001019">
    <property type="component" value="Chromosome"/>
</dbReference>
<dbReference type="Proteomes" id="UP000002490">
    <property type="component" value="Chromosome"/>
</dbReference>
<dbReference type="GO" id="GO:0030288">
    <property type="term" value="C:outer membrane-bounded periplasmic space"/>
    <property type="evidence" value="ECO:0000318"/>
    <property type="project" value="GO_Central"/>
</dbReference>
<dbReference type="GO" id="GO:0004867">
    <property type="term" value="F:serine-type endopeptidase inhibitor activity"/>
    <property type="evidence" value="ECO:0000318"/>
    <property type="project" value="GO_Central"/>
</dbReference>
<dbReference type="CDD" id="cd00242">
    <property type="entry name" value="Ecotin"/>
    <property type="match status" value="1"/>
</dbReference>
<dbReference type="Gene3D" id="2.60.40.550">
    <property type="entry name" value="Ecotin"/>
    <property type="match status" value="1"/>
</dbReference>
<dbReference type="HAMAP" id="MF_00706">
    <property type="entry name" value="Ecotin"/>
    <property type="match status" value="1"/>
</dbReference>
<dbReference type="InterPro" id="IPR036198">
    <property type="entry name" value="Ecotin_sf"/>
</dbReference>
<dbReference type="InterPro" id="IPR005658">
    <property type="entry name" value="Prot_inh_ecotin"/>
</dbReference>
<dbReference type="InterPro" id="IPR023084">
    <property type="entry name" value="Prot_inh_ecotin_gammaproteobac"/>
</dbReference>
<dbReference type="NCBIfam" id="NF002987">
    <property type="entry name" value="PRK03719.1"/>
    <property type="match status" value="1"/>
</dbReference>
<dbReference type="PANTHER" id="PTHR35890">
    <property type="match status" value="1"/>
</dbReference>
<dbReference type="PANTHER" id="PTHR35890:SF3">
    <property type="entry name" value="ECOTIN"/>
    <property type="match status" value="1"/>
</dbReference>
<dbReference type="Pfam" id="PF03974">
    <property type="entry name" value="Ecotin"/>
    <property type="match status" value="1"/>
</dbReference>
<dbReference type="PIRSF" id="PIRSF006865">
    <property type="entry name" value="Prot_inh_ecotin"/>
    <property type="match status" value="1"/>
</dbReference>
<dbReference type="SUPFAM" id="SSF49772">
    <property type="entry name" value="Ecotin, trypsin inhibitor"/>
    <property type="match status" value="1"/>
</dbReference>
<keyword id="KW-1015">Disulfide bond</keyword>
<keyword id="KW-0574">Periplasm</keyword>
<keyword id="KW-0646">Protease inhibitor</keyword>
<keyword id="KW-1185">Reference proteome</keyword>
<keyword id="KW-0722">Serine protease inhibitor</keyword>
<keyword id="KW-0732">Signal</keyword>
<proteinExistence type="inferred from homology"/>
<evidence type="ECO:0000255" key="1">
    <source>
        <dbReference type="HAMAP-Rule" id="MF_00706"/>
    </source>
</evidence>
<evidence type="ECO:0000305" key="2"/>
<comment type="function">
    <text evidence="1">General inhibitor of pancreatic serine proteases: inhibits chymotrypsin, trypsin, elastases, factor X, kallikrein as well as a variety of other proteases.</text>
</comment>
<comment type="subunit">
    <text evidence="1">Homodimer.</text>
</comment>
<comment type="subcellular location">
    <subcellularLocation>
        <location evidence="1">Periplasm</location>
    </subcellularLocation>
</comment>
<comment type="similarity">
    <text evidence="1">Belongs to the protease inhibitor I11 (ecotin) family.</text>
</comment>
<comment type="sequence caution" evidence="2">
    <conflict type="erroneous initiation">
        <sequence resource="EMBL-CDS" id="AAM86528"/>
    </conflict>
</comment>
<feature type="signal peptide" evidence="1">
    <location>
        <begin position="1"/>
        <end position="21"/>
    </location>
</feature>
<feature type="chain" id="PRO_0000007434" description="Ecotin">
    <location>
        <begin position="22"/>
        <end position="169"/>
    </location>
</feature>
<feature type="site" description="Reactive bond" evidence="1">
    <location>
        <begin position="110"/>
        <end position="111"/>
    </location>
</feature>
<feature type="disulfide bond" evidence="1">
    <location>
        <begin position="76"/>
        <end position="113"/>
    </location>
</feature>
<name>ECOT_YERPE</name>
<gene>
    <name evidence="1" type="primary">eco</name>
    <name type="ordered locus">YPO1211</name>
    <name type="ordered locus">y2977</name>
    <name type="ordered locus">YP_0926</name>
</gene>
<organism>
    <name type="scientific">Yersinia pestis</name>
    <dbReference type="NCBI Taxonomy" id="632"/>
    <lineage>
        <taxon>Bacteria</taxon>
        <taxon>Pseudomonadati</taxon>
        <taxon>Pseudomonadota</taxon>
        <taxon>Gammaproteobacteria</taxon>
        <taxon>Enterobacterales</taxon>
        <taxon>Yersiniaceae</taxon>
        <taxon>Yersinia</taxon>
    </lineage>
</organism>
<reference key="1">
    <citation type="journal article" date="2001" name="Nature">
        <title>Genome sequence of Yersinia pestis, the causative agent of plague.</title>
        <authorList>
            <person name="Parkhill J."/>
            <person name="Wren B.W."/>
            <person name="Thomson N.R."/>
            <person name="Titball R.W."/>
            <person name="Holden M.T.G."/>
            <person name="Prentice M.B."/>
            <person name="Sebaihia M."/>
            <person name="James K.D."/>
            <person name="Churcher C.M."/>
            <person name="Mungall K.L."/>
            <person name="Baker S."/>
            <person name="Basham D."/>
            <person name="Bentley S.D."/>
            <person name="Brooks K."/>
            <person name="Cerdeno-Tarraga A.-M."/>
            <person name="Chillingworth T."/>
            <person name="Cronin A."/>
            <person name="Davies R.M."/>
            <person name="Davis P."/>
            <person name="Dougan G."/>
            <person name="Feltwell T."/>
            <person name="Hamlin N."/>
            <person name="Holroyd S."/>
            <person name="Jagels K."/>
            <person name="Karlyshev A.V."/>
            <person name="Leather S."/>
            <person name="Moule S."/>
            <person name="Oyston P.C.F."/>
            <person name="Quail M.A."/>
            <person name="Rutherford K.M."/>
            <person name="Simmonds M."/>
            <person name="Skelton J."/>
            <person name="Stevens K."/>
            <person name="Whitehead S."/>
            <person name="Barrell B.G."/>
        </authorList>
    </citation>
    <scope>NUCLEOTIDE SEQUENCE [LARGE SCALE GENOMIC DNA]</scope>
    <source>
        <strain>CO-92 / Biovar Orientalis</strain>
    </source>
</reference>
<reference key="2">
    <citation type="journal article" date="2002" name="J. Bacteriol.">
        <title>Genome sequence of Yersinia pestis KIM.</title>
        <authorList>
            <person name="Deng W."/>
            <person name="Burland V."/>
            <person name="Plunkett G. III"/>
            <person name="Boutin A."/>
            <person name="Mayhew G.F."/>
            <person name="Liss P."/>
            <person name="Perna N.T."/>
            <person name="Rose D.J."/>
            <person name="Mau B."/>
            <person name="Zhou S."/>
            <person name="Schwartz D.C."/>
            <person name="Fetherston J.D."/>
            <person name="Lindler L.E."/>
            <person name="Brubaker R.R."/>
            <person name="Plano G.V."/>
            <person name="Straley S.C."/>
            <person name="McDonough K.A."/>
            <person name="Nilles M.L."/>
            <person name="Matson J.S."/>
            <person name="Blattner F.R."/>
            <person name="Perry R.D."/>
        </authorList>
    </citation>
    <scope>NUCLEOTIDE SEQUENCE [LARGE SCALE GENOMIC DNA]</scope>
    <source>
        <strain>KIM10+ / Biovar Mediaevalis</strain>
    </source>
</reference>
<reference key="3">
    <citation type="journal article" date="2004" name="DNA Res.">
        <title>Complete genome sequence of Yersinia pestis strain 91001, an isolate avirulent to humans.</title>
        <authorList>
            <person name="Song Y."/>
            <person name="Tong Z."/>
            <person name="Wang J."/>
            <person name="Wang L."/>
            <person name="Guo Z."/>
            <person name="Han Y."/>
            <person name="Zhang J."/>
            <person name="Pei D."/>
            <person name="Zhou D."/>
            <person name="Qin H."/>
            <person name="Pang X."/>
            <person name="Han Y."/>
            <person name="Zhai J."/>
            <person name="Li M."/>
            <person name="Cui B."/>
            <person name="Qi Z."/>
            <person name="Jin L."/>
            <person name="Dai R."/>
            <person name="Chen F."/>
            <person name="Li S."/>
            <person name="Ye C."/>
            <person name="Du Z."/>
            <person name="Lin W."/>
            <person name="Wang J."/>
            <person name="Yu J."/>
            <person name="Yang H."/>
            <person name="Wang J."/>
            <person name="Huang P."/>
            <person name="Yang R."/>
        </authorList>
    </citation>
    <scope>NUCLEOTIDE SEQUENCE [LARGE SCALE GENOMIC DNA]</scope>
    <source>
        <strain>91001 / Biovar Mediaevalis</strain>
    </source>
</reference>